<feature type="initiator methionine" description="Removed" evidence="1">
    <location>
        <position position="1"/>
    </location>
</feature>
<feature type="chain" id="PRO_0000359622" description="Photosystem II D2 protein">
    <location>
        <begin position="2"/>
        <end position="353"/>
    </location>
</feature>
<feature type="transmembrane region" description="Helical" evidence="2">
    <location>
        <begin position="41"/>
        <end position="61"/>
    </location>
</feature>
<feature type="transmembrane region" description="Helical" evidence="2">
    <location>
        <begin position="125"/>
        <end position="141"/>
    </location>
</feature>
<feature type="transmembrane region" description="Helical" evidence="2">
    <location>
        <begin position="153"/>
        <end position="166"/>
    </location>
</feature>
<feature type="transmembrane region" description="Helical" evidence="2">
    <location>
        <begin position="208"/>
        <end position="228"/>
    </location>
</feature>
<feature type="transmembrane region" description="Helical" evidence="2">
    <location>
        <begin position="279"/>
        <end position="295"/>
    </location>
</feature>
<feature type="binding site" description="axial binding residue" evidence="2">
    <location>
        <position position="118"/>
    </location>
    <ligand>
        <name>chlorophyll a</name>
        <dbReference type="ChEBI" id="CHEBI:58416"/>
        <label>ChlzD2</label>
    </ligand>
    <ligandPart>
        <name>Mg</name>
        <dbReference type="ChEBI" id="CHEBI:25107"/>
    </ligandPart>
</feature>
<feature type="binding site" evidence="2">
    <location>
        <position position="130"/>
    </location>
    <ligand>
        <name>pheophytin a</name>
        <dbReference type="ChEBI" id="CHEBI:136840"/>
        <label>D2</label>
    </ligand>
</feature>
<feature type="binding site" evidence="2">
    <location>
        <position position="143"/>
    </location>
    <ligand>
        <name>pheophytin a</name>
        <dbReference type="ChEBI" id="CHEBI:136840"/>
        <label>D2</label>
    </ligand>
</feature>
<feature type="binding site" description="axial binding residue" evidence="2">
    <location>
        <position position="198"/>
    </location>
    <ligand>
        <name>chlorophyll a</name>
        <dbReference type="ChEBI" id="CHEBI:58416"/>
        <label>PD2</label>
    </ligand>
    <ligandPart>
        <name>Mg</name>
        <dbReference type="ChEBI" id="CHEBI:25107"/>
    </ligandPart>
</feature>
<feature type="binding site" evidence="2">
    <location>
        <position position="215"/>
    </location>
    <ligand>
        <name>a plastoquinone</name>
        <dbReference type="ChEBI" id="CHEBI:17757"/>
        <label>Q(A)</label>
    </ligand>
</feature>
<feature type="binding site" evidence="2">
    <location>
        <position position="215"/>
    </location>
    <ligand>
        <name>Fe cation</name>
        <dbReference type="ChEBI" id="CHEBI:24875"/>
        <note>ligand shared with heterodimeric partner</note>
    </ligand>
</feature>
<feature type="binding site" evidence="2">
    <location>
        <position position="262"/>
    </location>
    <ligand>
        <name>a plastoquinone</name>
        <dbReference type="ChEBI" id="CHEBI:17757"/>
        <label>Q(A)</label>
    </ligand>
</feature>
<feature type="binding site" evidence="2">
    <location>
        <position position="269"/>
    </location>
    <ligand>
        <name>Fe cation</name>
        <dbReference type="ChEBI" id="CHEBI:24875"/>
        <note>ligand shared with heterodimeric partner</note>
    </ligand>
</feature>
<feature type="modified residue" description="N-acetylthreonine" evidence="1">
    <location>
        <position position="2"/>
    </location>
</feature>
<feature type="modified residue" description="Phosphothreonine" evidence="1">
    <location>
        <position position="2"/>
    </location>
</feature>
<protein>
    <recommendedName>
        <fullName evidence="2">Photosystem II D2 protein</fullName>
        <shortName evidence="2">PSII D2 protein</shortName>
        <ecNumber evidence="2">1.10.3.9</ecNumber>
    </recommendedName>
    <alternativeName>
        <fullName evidence="2">Photosystem Q(A) protein</fullName>
    </alternativeName>
</protein>
<evidence type="ECO:0000250" key="1">
    <source>
        <dbReference type="UniProtKB" id="P56761"/>
    </source>
</evidence>
<evidence type="ECO:0000255" key="2">
    <source>
        <dbReference type="HAMAP-Rule" id="MF_01383"/>
    </source>
</evidence>
<comment type="function">
    <text evidence="2">Photosystem II (PSII) is a light-driven water:plastoquinone oxidoreductase that uses light energy to abstract electrons from H(2)O, generating O(2) and a proton gradient subsequently used for ATP formation. It consists of a core antenna complex that captures photons, and an electron transfer chain that converts photonic excitation into a charge separation. The D1/D2 (PsbA/PsbD) reaction center heterodimer binds P680, the primary electron donor of PSII as well as several subsequent electron acceptors. D2 is needed for assembly of a stable PSII complex.</text>
</comment>
<comment type="catalytic activity">
    <reaction evidence="2">
        <text>2 a plastoquinone + 4 hnu + 2 H2O = 2 a plastoquinol + O2</text>
        <dbReference type="Rhea" id="RHEA:36359"/>
        <dbReference type="Rhea" id="RHEA-COMP:9561"/>
        <dbReference type="Rhea" id="RHEA-COMP:9562"/>
        <dbReference type="ChEBI" id="CHEBI:15377"/>
        <dbReference type="ChEBI" id="CHEBI:15379"/>
        <dbReference type="ChEBI" id="CHEBI:17757"/>
        <dbReference type="ChEBI" id="CHEBI:30212"/>
        <dbReference type="ChEBI" id="CHEBI:62192"/>
        <dbReference type="EC" id="1.10.3.9"/>
    </reaction>
</comment>
<comment type="cofactor">
    <text evidence="2">The D1/D2 heterodimer binds P680, chlorophylls that are the primary electron donor of PSII, and subsequent electron acceptors. It shares a non-heme iron and each subunit binds pheophytin, quinone, additional chlorophylls, carotenoids and lipids. There is also a Cl(-1) ion associated with D1 and D2, which is required for oxygen evolution. The PSII complex binds additional chlorophylls, carotenoids and specific lipids.</text>
</comment>
<comment type="subunit">
    <text evidence="2">PSII is composed of 1 copy each of membrane proteins PsbA, PsbB, PsbC, PsbD, PsbE, PsbF, PsbH, PsbI, PsbJ, PsbK, PsbL, PsbM, PsbT, PsbX, PsbY, PsbZ, Psb30/Ycf12, at least 3 peripheral proteins of the oxygen-evolving complex and a large number of cofactors. It forms dimeric complexes.</text>
</comment>
<comment type="subcellular location">
    <subcellularLocation>
        <location evidence="2">Plastid</location>
        <location evidence="2">Chloroplast thylakoid membrane</location>
        <topology evidence="2">Multi-pass membrane protein</topology>
    </subcellularLocation>
</comment>
<comment type="miscellaneous">
    <text evidence="2">2 of the reaction center chlorophylls (ChlD1 and ChlD2) are entirely coordinated by water.</text>
</comment>
<comment type="similarity">
    <text evidence="2">Belongs to the reaction center PufL/M/PsbA/D family.</text>
</comment>
<keyword id="KW-0007">Acetylation</keyword>
<keyword id="KW-0148">Chlorophyll</keyword>
<keyword id="KW-0150">Chloroplast</keyword>
<keyword id="KW-0157">Chromophore</keyword>
<keyword id="KW-0249">Electron transport</keyword>
<keyword id="KW-0408">Iron</keyword>
<keyword id="KW-0460">Magnesium</keyword>
<keyword id="KW-0472">Membrane</keyword>
<keyword id="KW-0479">Metal-binding</keyword>
<keyword id="KW-0560">Oxidoreductase</keyword>
<keyword id="KW-0597">Phosphoprotein</keyword>
<keyword id="KW-0602">Photosynthesis</keyword>
<keyword id="KW-0604">Photosystem II</keyword>
<keyword id="KW-0934">Plastid</keyword>
<keyword id="KW-0793">Thylakoid</keyword>
<keyword id="KW-0812">Transmembrane</keyword>
<keyword id="KW-1133">Transmembrane helix</keyword>
<keyword id="KW-0813">Transport</keyword>
<sequence>MTIALGKFTKDEKDLFDIMDDWLRRDRFVFVGWSGLLLFPCAYFALGGWFTGTTFVTSWYTHGLASSYLEGCNFLTAAVSTPANSLAHSLLLLWGPEAQGDFTRWCQLGGLWAFVALHGAFALIGFMLRQFELSRSVQLRPYNAIAFSGPIAVFVSVFLIYPLGQSGWFFAPSFGVAAIFRFILFFQGFHNWTLNPFHMMGVAGVLGAALLCAIHGATVENTLFEDGDGANTFRAFNPTQAEETYSMVTANRFWSQIFGVAFSNKRWLHFFMLFVPVTGLWMSALGVVGLALNLRAYDFVSQEIRAAEDPEFETFYTKNILLNEGIRAWMAAQDQPHENLIFPEEVLPRGNAL</sequence>
<dbReference type="EC" id="1.10.3.9" evidence="2"/>
<dbReference type="EMBL" id="AP009369">
    <property type="protein sequence ID" value="BAF50018.1"/>
    <property type="molecule type" value="Genomic_DNA"/>
</dbReference>
<dbReference type="RefSeq" id="YP_001123194.1">
    <property type="nucleotide sequence ID" value="NC_009268.1"/>
</dbReference>
<dbReference type="SMR" id="A4QK13"/>
<dbReference type="GeneID" id="4962522"/>
<dbReference type="GO" id="GO:0009535">
    <property type="term" value="C:chloroplast thylakoid membrane"/>
    <property type="evidence" value="ECO:0007669"/>
    <property type="project" value="UniProtKB-SubCell"/>
</dbReference>
<dbReference type="GO" id="GO:0009523">
    <property type="term" value="C:photosystem II"/>
    <property type="evidence" value="ECO:0007669"/>
    <property type="project" value="UniProtKB-KW"/>
</dbReference>
<dbReference type="GO" id="GO:0016168">
    <property type="term" value="F:chlorophyll binding"/>
    <property type="evidence" value="ECO:0007669"/>
    <property type="project" value="UniProtKB-UniRule"/>
</dbReference>
<dbReference type="GO" id="GO:0045156">
    <property type="term" value="F:electron transporter, transferring electrons within the cyclic electron transport pathway of photosynthesis activity"/>
    <property type="evidence" value="ECO:0007669"/>
    <property type="project" value="InterPro"/>
</dbReference>
<dbReference type="GO" id="GO:0005506">
    <property type="term" value="F:iron ion binding"/>
    <property type="evidence" value="ECO:0007669"/>
    <property type="project" value="UniProtKB-UniRule"/>
</dbReference>
<dbReference type="GO" id="GO:0010242">
    <property type="term" value="F:oxygen evolving activity"/>
    <property type="evidence" value="ECO:0007669"/>
    <property type="project" value="UniProtKB-EC"/>
</dbReference>
<dbReference type="GO" id="GO:0009772">
    <property type="term" value="P:photosynthetic electron transport in photosystem II"/>
    <property type="evidence" value="ECO:0007669"/>
    <property type="project" value="InterPro"/>
</dbReference>
<dbReference type="CDD" id="cd09288">
    <property type="entry name" value="Photosystem-II_D2"/>
    <property type="match status" value="1"/>
</dbReference>
<dbReference type="FunFam" id="1.20.85.10:FF:000001">
    <property type="entry name" value="photosystem II D2 protein-like"/>
    <property type="match status" value="1"/>
</dbReference>
<dbReference type="Gene3D" id="1.20.85.10">
    <property type="entry name" value="Photosystem II protein D1-like"/>
    <property type="match status" value="1"/>
</dbReference>
<dbReference type="HAMAP" id="MF_01383">
    <property type="entry name" value="PSII_PsbD_D2"/>
    <property type="match status" value="1"/>
</dbReference>
<dbReference type="InterPro" id="IPR055266">
    <property type="entry name" value="D1/D2"/>
</dbReference>
<dbReference type="InterPro" id="IPR036854">
    <property type="entry name" value="Photo_II_D1/D2_sf"/>
</dbReference>
<dbReference type="InterPro" id="IPR000484">
    <property type="entry name" value="Photo_RC_L/M"/>
</dbReference>
<dbReference type="InterPro" id="IPR055265">
    <property type="entry name" value="Photo_RC_L/M_CS"/>
</dbReference>
<dbReference type="InterPro" id="IPR005868">
    <property type="entry name" value="PSII_PsbD/D2"/>
</dbReference>
<dbReference type="NCBIfam" id="TIGR01152">
    <property type="entry name" value="psbD"/>
    <property type="match status" value="1"/>
</dbReference>
<dbReference type="PANTHER" id="PTHR33149:SF57">
    <property type="entry name" value="PHOTOSYSTEM II D2 PROTEIN"/>
    <property type="match status" value="1"/>
</dbReference>
<dbReference type="PANTHER" id="PTHR33149">
    <property type="entry name" value="PHOTOSYSTEM II PROTEIN D1"/>
    <property type="match status" value="1"/>
</dbReference>
<dbReference type="Pfam" id="PF00124">
    <property type="entry name" value="Photo_RC"/>
    <property type="match status" value="1"/>
</dbReference>
<dbReference type="PRINTS" id="PR00256">
    <property type="entry name" value="REACTNCENTRE"/>
</dbReference>
<dbReference type="SUPFAM" id="SSF81483">
    <property type="entry name" value="Bacterial photosystem II reaction centre, L and M subunits"/>
    <property type="match status" value="1"/>
</dbReference>
<dbReference type="PROSITE" id="PS00244">
    <property type="entry name" value="REACTION_CENTER"/>
    <property type="match status" value="1"/>
</dbReference>
<geneLocation type="chloroplast"/>
<reference key="1">
    <citation type="submission" date="2007-03" db="EMBL/GenBank/DDBJ databases">
        <title>Sequencing analysis of Arabis hirsuta chloroplast DNA.</title>
        <authorList>
            <person name="Hosouchi T."/>
            <person name="Tsuruoka H."/>
            <person name="Kotani H."/>
        </authorList>
    </citation>
    <scope>NUCLEOTIDE SEQUENCE [LARGE SCALE GENOMIC DNA]</scope>
</reference>
<accession>A4QK13</accession>
<proteinExistence type="inferred from homology"/>
<gene>
    <name evidence="2" type="primary">psbD</name>
</gene>
<organism>
    <name type="scientific">Arabis hirsuta</name>
    <name type="common">Hairy rock-cress</name>
    <name type="synonym">Turritis hirsuta</name>
    <dbReference type="NCBI Taxonomy" id="78191"/>
    <lineage>
        <taxon>Eukaryota</taxon>
        <taxon>Viridiplantae</taxon>
        <taxon>Streptophyta</taxon>
        <taxon>Embryophyta</taxon>
        <taxon>Tracheophyta</taxon>
        <taxon>Spermatophyta</taxon>
        <taxon>Magnoliopsida</taxon>
        <taxon>eudicotyledons</taxon>
        <taxon>Gunneridae</taxon>
        <taxon>Pentapetalae</taxon>
        <taxon>rosids</taxon>
        <taxon>malvids</taxon>
        <taxon>Brassicales</taxon>
        <taxon>Brassicaceae</taxon>
        <taxon>Arabideae</taxon>
        <taxon>Arabis</taxon>
    </lineage>
</organism>
<name>PSBD_ARAHI</name>